<organism>
    <name type="scientific">Desulforudis audaxviator (strain MP104C)</name>
    <dbReference type="NCBI Taxonomy" id="477974"/>
    <lineage>
        <taxon>Bacteria</taxon>
        <taxon>Bacillati</taxon>
        <taxon>Bacillota</taxon>
        <taxon>Clostridia</taxon>
        <taxon>Thermoanaerobacterales</taxon>
        <taxon>Candidatus Desulforudaceae</taxon>
        <taxon>Candidatus Desulforudis</taxon>
    </lineage>
</organism>
<protein>
    <recommendedName>
        <fullName evidence="1">Putative septation protein SpoVG</fullName>
    </recommendedName>
</protein>
<evidence type="ECO:0000255" key="1">
    <source>
        <dbReference type="HAMAP-Rule" id="MF_00819"/>
    </source>
</evidence>
<proteinExistence type="inferred from homology"/>
<accession>B1I193</accession>
<feature type="chain" id="PRO_1000196500" description="Putative septation protein SpoVG">
    <location>
        <begin position="1"/>
        <end position="88"/>
    </location>
</feature>
<keyword id="KW-0131">Cell cycle</keyword>
<keyword id="KW-0132">Cell division</keyword>
<keyword id="KW-1185">Reference proteome</keyword>
<keyword id="KW-0717">Septation</keyword>
<reference key="1">
    <citation type="submission" date="2007-10" db="EMBL/GenBank/DDBJ databases">
        <title>Complete sequence of chromosome of Desulforudis audaxviator MP104C.</title>
        <authorList>
            <person name="Copeland A."/>
            <person name="Lucas S."/>
            <person name="Lapidus A."/>
            <person name="Barry K."/>
            <person name="Glavina del Rio T."/>
            <person name="Dalin E."/>
            <person name="Tice H."/>
            <person name="Bruce D."/>
            <person name="Pitluck S."/>
            <person name="Lowry S.R."/>
            <person name="Larimer F."/>
            <person name="Land M.L."/>
            <person name="Hauser L."/>
            <person name="Kyrpides N."/>
            <person name="Ivanova N.N."/>
            <person name="Richardson P."/>
        </authorList>
    </citation>
    <scope>NUCLEOTIDE SEQUENCE [LARGE SCALE GENOMIC DNA]</scope>
    <source>
        <strain>MP104C</strain>
    </source>
</reference>
<dbReference type="EMBL" id="CP000860">
    <property type="protein sequence ID" value="ACA58635.1"/>
    <property type="molecule type" value="Genomic_DNA"/>
</dbReference>
<dbReference type="RefSeq" id="WP_012301229.1">
    <property type="nucleotide sequence ID" value="NC_010424.1"/>
</dbReference>
<dbReference type="SMR" id="B1I193"/>
<dbReference type="STRING" id="477974.Daud_0067"/>
<dbReference type="KEGG" id="dau:Daud_0067"/>
<dbReference type="eggNOG" id="COG2088">
    <property type="taxonomic scope" value="Bacteria"/>
</dbReference>
<dbReference type="HOGENOM" id="CLU_103669_2_0_9"/>
<dbReference type="OrthoDB" id="9796286at2"/>
<dbReference type="Proteomes" id="UP000008544">
    <property type="component" value="Chromosome"/>
</dbReference>
<dbReference type="GO" id="GO:0000917">
    <property type="term" value="P:division septum assembly"/>
    <property type="evidence" value="ECO:0007669"/>
    <property type="project" value="UniProtKB-KW"/>
</dbReference>
<dbReference type="GO" id="GO:0030435">
    <property type="term" value="P:sporulation resulting in formation of a cellular spore"/>
    <property type="evidence" value="ECO:0007669"/>
    <property type="project" value="InterPro"/>
</dbReference>
<dbReference type="Gene3D" id="3.30.1120.40">
    <property type="entry name" value="Stage V sporulation protein G"/>
    <property type="match status" value="1"/>
</dbReference>
<dbReference type="HAMAP" id="MF_00819">
    <property type="entry name" value="SpoVG"/>
    <property type="match status" value="1"/>
</dbReference>
<dbReference type="InterPro" id="IPR007170">
    <property type="entry name" value="SpoVG"/>
</dbReference>
<dbReference type="InterPro" id="IPR036751">
    <property type="entry name" value="SpoVG_sf"/>
</dbReference>
<dbReference type="NCBIfam" id="NF009749">
    <property type="entry name" value="PRK13259.1"/>
    <property type="match status" value="1"/>
</dbReference>
<dbReference type="PANTHER" id="PTHR38429">
    <property type="entry name" value="SEPTATION PROTEIN SPOVG-RELATED"/>
    <property type="match status" value="1"/>
</dbReference>
<dbReference type="PANTHER" id="PTHR38429:SF1">
    <property type="entry name" value="SEPTATION PROTEIN SPOVG-RELATED"/>
    <property type="match status" value="1"/>
</dbReference>
<dbReference type="Pfam" id="PF04026">
    <property type="entry name" value="SpoVG"/>
    <property type="match status" value="1"/>
</dbReference>
<dbReference type="SUPFAM" id="SSF160537">
    <property type="entry name" value="SpoVG-like"/>
    <property type="match status" value="1"/>
</dbReference>
<sequence>MEVTDVRIRKVLDGGKMKAIVSVTLDDAFVVHDIKIVEGQNGLFVAMPSRRTPNGEFRDIAHPINASARARIQNAVLEAYEHRDAAEF</sequence>
<gene>
    <name evidence="1" type="primary">spoVG</name>
    <name type="ordered locus">Daud_0067</name>
</gene>
<comment type="function">
    <text evidence="1">Could be involved in septation.</text>
</comment>
<comment type="similarity">
    <text evidence="1">Belongs to the SpoVG family.</text>
</comment>
<name>SP5G_DESAP</name>